<accession>P75400</accession>
<keyword id="KW-0067">ATP-binding</keyword>
<keyword id="KW-0173">Coenzyme A biosynthesis</keyword>
<keyword id="KW-0963">Cytoplasm</keyword>
<keyword id="KW-0418">Kinase</keyword>
<keyword id="KW-0547">Nucleotide-binding</keyword>
<keyword id="KW-1185">Reference proteome</keyword>
<keyword id="KW-0808">Transferase</keyword>
<name>COAE_MYCPN</name>
<organism>
    <name type="scientific">Mycoplasma pneumoniae (strain ATCC 29342 / M129 / Subtype 1)</name>
    <name type="common">Mycoplasmoides pneumoniae</name>
    <dbReference type="NCBI Taxonomy" id="272634"/>
    <lineage>
        <taxon>Bacteria</taxon>
        <taxon>Bacillati</taxon>
        <taxon>Mycoplasmatota</taxon>
        <taxon>Mycoplasmoidales</taxon>
        <taxon>Mycoplasmoidaceae</taxon>
        <taxon>Mycoplasmoides</taxon>
    </lineage>
</organism>
<evidence type="ECO:0000255" key="1">
    <source>
        <dbReference type="HAMAP-Rule" id="MF_00376"/>
    </source>
</evidence>
<evidence type="ECO:0000305" key="2"/>
<protein>
    <recommendedName>
        <fullName evidence="1">Dephospho-CoA kinase</fullName>
        <ecNumber evidence="1">2.7.1.24</ecNumber>
    </recommendedName>
    <alternativeName>
        <fullName evidence="1">Dephosphocoenzyme A kinase</fullName>
    </alternativeName>
</protein>
<sequence>MLIAVVGKAGVGKTTVLQYIADYFHFPVFFADRFIHQQYANGQAGYAIVKQQFGAQFVNHEAVDRKQLAQYVFNQPDELKRLSNLTKPLVQEWLNQLKAQFQDKIALVEIAVMLNYWNDYRPFFDEVIQIERDAKIVKQALKARGVDVEQVQKLIADPTYPILTVINNSTVAECALHVTQFLESIAKSDKCHHGHYQTPK</sequence>
<reference key="1">
    <citation type="journal article" date="1996" name="Nucleic Acids Res.">
        <title>Complete sequence analysis of the genome of the bacterium Mycoplasma pneumoniae.</title>
        <authorList>
            <person name="Himmelreich R."/>
            <person name="Hilbert H."/>
            <person name="Plagens H."/>
            <person name="Pirkl E."/>
            <person name="Li B.-C."/>
            <person name="Herrmann R."/>
        </authorList>
    </citation>
    <scope>NUCLEOTIDE SEQUENCE [LARGE SCALE GENOMIC DNA]</scope>
    <source>
        <strain>ATCC 29342 / M129 / Subtype 1</strain>
    </source>
</reference>
<comment type="function">
    <text evidence="1">Catalyzes the phosphorylation of the 3'-hydroxyl group of dephosphocoenzyme A to form coenzyme A.</text>
</comment>
<comment type="catalytic activity">
    <reaction evidence="1">
        <text>3'-dephospho-CoA + ATP = ADP + CoA + H(+)</text>
        <dbReference type="Rhea" id="RHEA:18245"/>
        <dbReference type="ChEBI" id="CHEBI:15378"/>
        <dbReference type="ChEBI" id="CHEBI:30616"/>
        <dbReference type="ChEBI" id="CHEBI:57287"/>
        <dbReference type="ChEBI" id="CHEBI:57328"/>
        <dbReference type="ChEBI" id="CHEBI:456216"/>
        <dbReference type="EC" id="2.7.1.24"/>
    </reaction>
</comment>
<comment type="pathway">
    <text evidence="1">Cofactor biosynthesis; coenzyme A biosynthesis; CoA from (R)-pantothenate: step 5/5.</text>
</comment>
<comment type="subcellular location">
    <subcellularLocation>
        <location evidence="1">Cytoplasm</location>
    </subcellularLocation>
</comment>
<comment type="similarity">
    <text evidence="1 2">Belongs to the CoaE family.</text>
</comment>
<proteinExistence type="inferred from homology"/>
<feature type="chain" id="PRO_0000172962" description="Dephospho-CoA kinase">
    <location>
        <begin position="1"/>
        <end position="200"/>
    </location>
</feature>
<feature type="domain" description="DPCK" evidence="1">
    <location>
        <begin position="2"/>
        <end position="200"/>
    </location>
</feature>
<feature type="binding site" evidence="1">
    <location>
        <begin position="10"/>
        <end position="15"/>
    </location>
    <ligand>
        <name>ATP</name>
        <dbReference type="ChEBI" id="CHEBI:30616"/>
    </ligand>
</feature>
<dbReference type="EC" id="2.7.1.24" evidence="1"/>
<dbReference type="EMBL" id="U00089">
    <property type="protein sequence ID" value="AAB96103.1"/>
    <property type="molecule type" value="Genomic_DNA"/>
</dbReference>
<dbReference type="PIR" id="S73781">
    <property type="entry name" value="S73781"/>
</dbReference>
<dbReference type="RefSeq" id="NP_110070.1">
    <property type="nucleotide sequence ID" value="NC_000912.1"/>
</dbReference>
<dbReference type="RefSeq" id="WP_010874738.1">
    <property type="nucleotide sequence ID" value="NZ_OU342337.1"/>
</dbReference>
<dbReference type="SMR" id="P75400"/>
<dbReference type="STRING" id="272634.MPN_382"/>
<dbReference type="EnsemblBacteria" id="AAB96103">
    <property type="protein sequence ID" value="AAB96103"/>
    <property type="gene ID" value="MPN_382"/>
</dbReference>
<dbReference type="GeneID" id="66608960"/>
<dbReference type="KEGG" id="mpn:MPN_382"/>
<dbReference type="HOGENOM" id="CLU_057180_4_0_14"/>
<dbReference type="OrthoDB" id="399073at2"/>
<dbReference type="BioCyc" id="MPNE272634:G1GJ3-605-MONOMER"/>
<dbReference type="UniPathway" id="UPA00241">
    <property type="reaction ID" value="UER00356"/>
</dbReference>
<dbReference type="Proteomes" id="UP000000808">
    <property type="component" value="Chromosome"/>
</dbReference>
<dbReference type="GO" id="GO:0005737">
    <property type="term" value="C:cytoplasm"/>
    <property type="evidence" value="ECO:0007669"/>
    <property type="project" value="UniProtKB-SubCell"/>
</dbReference>
<dbReference type="GO" id="GO:0005524">
    <property type="term" value="F:ATP binding"/>
    <property type="evidence" value="ECO:0007669"/>
    <property type="project" value="UniProtKB-UniRule"/>
</dbReference>
<dbReference type="GO" id="GO:0004140">
    <property type="term" value="F:dephospho-CoA kinase activity"/>
    <property type="evidence" value="ECO:0007669"/>
    <property type="project" value="UniProtKB-UniRule"/>
</dbReference>
<dbReference type="GO" id="GO:0015937">
    <property type="term" value="P:coenzyme A biosynthetic process"/>
    <property type="evidence" value="ECO:0007669"/>
    <property type="project" value="UniProtKB-UniRule"/>
</dbReference>
<dbReference type="CDD" id="cd02022">
    <property type="entry name" value="DPCK"/>
    <property type="match status" value="1"/>
</dbReference>
<dbReference type="Gene3D" id="3.40.50.300">
    <property type="entry name" value="P-loop containing nucleotide triphosphate hydrolases"/>
    <property type="match status" value="1"/>
</dbReference>
<dbReference type="HAMAP" id="MF_00376">
    <property type="entry name" value="Dephospho_CoA_kinase"/>
    <property type="match status" value="1"/>
</dbReference>
<dbReference type="InterPro" id="IPR001977">
    <property type="entry name" value="Depp_CoAkinase"/>
</dbReference>
<dbReference type="InterPro" id="IPR027417">
    <property type="entry name" value="P-loop_NTPase"/>
</dbReference>
<dbReference type="NCBIfam" id="TIGR00152">
    <property type="entry name" value="dephospho-CoA kinase"/>
    <property type="match status" value="1"/>
</dbReference>
<dbReference type="Pfam" id="PF01121">
    <property type="entry name" value="CoaE"/>
    <property type="match status" value="1"/>
</dbReference>
<dbReference type="SUPFAM" id="SSF52540">
    <property type="entry name" value="P-loop containing nucleoside triphosphate hydrolases"/>
    <property type="match status" value="1"/>
</dbReference>
<dbReference type="PROSITE" id="PS51219">
    <property type="entry name" value="DPCK"/>
    <property type="match status" value="1"/>
</dbReference>
<gene>
    <name evidence="1" type="primary">coaE</name>
    <name type="ordered locus">MPN_382</name>
    <name type="ORF">MP455</name>
</gene>